<sequence>MNPNQKIITIGSVSLTIATICFLMQIAILVTTVTLHFKQYECDSPANNQVMPCEPIIIERNITEIVYLTNTTIEKEICPKLVEYRNWSKPQCKITGFAPFSKDNSIRLSAGGDIWVTREPYVSCDPGKCYQFALGQGTTLDNKHSNDTIHDRTPHRTLLMNELGVPFHLGTRQVCIAWSSSSCHDGKAWLHVCVTGYDKNATASFIYDGRLVDSIGSWSKNILRTQESECVCINGTCTVVMTDGSASERADTKILFIEEGKIVHISPLSGSAQHVEECSCYPRYPGVRCVCRDNWKGSNRPVVDINVKDYSIASSYVCSGLVGDTPRKNDRYSSSYCRNPNNEKGNHGVKGWAFDDGNDVWMGRTISDESRSGYETFKVIGGWSTPNSKLQINRQVIVDSDNRSGYSGIFSVEGKSCINRCFYVELIRGREQETRVWWTSNSIVVFCGTSGTYGTGSWPDGADINLMPI</sequence>
<organism>
    <name type="scientific">Influenza A virus (strain A/Memphis/2/1978 H3N2)</name>
    <dbReference type="NCBI Taxonomy" id="383580"/>
    <lineage>
        <taxon>Viruses</taxon>
        <taxon>Riboviria</taxon>
        <taxon>Orthornavirae</taxon>
        <taxon>Negarnaviricota</taxon>
        <taxon>Polyploviricotina</taxon>
        <taxon>Insthoviricetes</taxon>
        <taxon>Articulavirales</taxon>
        <taxon>Orthomyxoviridae</taxon>
        <taxon>Alphainfluenzavirus</taxon>
        <taxon>Alphainfluenzavirus influenzae</taxon>
        <taxon>Influenza A virus</taxon>
    </lineage>
</organism>
<organismHost>
    <name type="scientific">Aves</name>
    <dbReference type="NCBI Taxonomy" id="8782"/>
</organismHost>
<organismHost>
    <name type="scientific">Cetacea</name>
    <name type="common">whales</name>
    <dbReference type="NCBI Taxonomy" id="9721"/>
</organismHost>
<organismHost>
    <name type="scientific">Homo sapiens</name>
    <name type="common">Human</name>
    <dbReference type="NCBI Taxonomy" id="9606"/>
</organismHost>
<organismHost>
    <name type="scientific">Phocidae</name>
    <name type="common">true seals</name>
    <dbReference type="NCBI Taxonomy" id="9709"/>
</organismHost>
<organismHost>
    <name type="scientific">Sus scrofa</name>
    <name type="common">Pig</name>
    <dbReference type="NCBI Taxonomy" id="9823"/>
</organismHost>
<reference key="1">
    <citation type="submission" date="2005-12" db="EMBL/GenBank/DDBJ databases">
        <title>The NIAID influenza genome sequencing project.</title>
        <authorList>
            <person name="Ghedin E."/>
            <person name="Spiro D."/>
            <person name="Miller N."/>
            <person name="Zaborsky J."/>
            <person name="Feldblyum T."/>
            <person name="Subbu V."/>
            <person name="Shumway M."/>
            <person name="Sparenborg J."/>
            <person name="Groveman L."/>
            <person name="Halpin R."/>
            <person name="Sitz J."/>
            <person name="Koo H."/>
            <person name="Salzberg S.L."/>
            <person name="Webster R.G."/>
            <person name="Hoffmann E."/>
            <person name="Krauss S."/>
            <person name="Naeve C."/>
            <person name="Bao Y."/>
            <person name="Bolotov P."/>
            <person name="Dernovoy D."/>
            <person name="Kiryutin B."/>
            <person name="Lipman D.J."/>
            <person name="Tatusova T."/>
        </authorList>
    </citation>
    <scope>NUCLEOTIDE SEQUENCE [GENOMIC RNA]</scope>
</reference>
<reference key="2">
    <citation type="journal article" date="2004" name="Virus Res.">
        <title>Assembly and budding of influenza virus.</title>
        <authorList>
            <person name="Nayak D.P."/>
            <person name="Hui E.K."/>
            <person name="Barman S."/>
        </authorList>
    </citation>
    <scope>REVIEW</scope>
</reference>
<reference key="3">
    <citation type="journal article" date="2005" name="N. Engl. J. Med.">
        <title>Neuraminidase inhibitors for influenza.</title>
        <authorList>
            <person name="Moscona A."/>
        </authorList>
    </citation>
    <scope>REVIEW</scope>
</reference>
<reference key="4">
    <citation type="journal article" date="2005" name="Biol. Pharm. Bull.">
        <title>Sialobiology of influenza: molecular mechanism of host range variation of influenza viruses.</title>
        <authorList>
            <person name="Suzuki Y."/>
        </authorList>
    </citation>
    <scope>REVIEW</scope>
</reference>
<accession>Q2VNF0</accession>
<dbReference type="EC" id="3.2.1.18" evidence="1"/>
<dbReference type="EMBL" id="CY006693">
    <property type="protein sequence ID" value="ABB96322.1"/>
    <property type="molecule type" value="Genomic_RNA"/>
</dbReference>
<dbReference type="SMR" id="Q2VNF0"/>
<dbReference type="CAZy" id="GH34">
    <property type="family name" value="Glycoside Hydrolase Family 34"/>
</dbReference>
<dbReference type="GlyCosmos" id="Q2VNF0">
    <property type="glycosylation" value="7 sites, No reported glycans"/>
</dbReference>
<dbReference type="PRO" id="PR:Q2VNF0"/>
<dbReference type="Proteomes" id="UP000007555">
    <property type="component" value="Genome"/>
</dbReference>
<dbReference type="GO" id="GO:0020002">
    <property type="term" value="C:host cell plasma membrane"/>
    <property type="evidence" value="ECO:0007669"/>
    <property type="project" value="UniProtKB-SubCell"/>
</dbReference>
<dbReference type="GO" id="GO:0016020">
    <property type="term" value="C:membrane"/>
    <property type="evidence" value="ECO:0007669"/>
    <property type="project" value="UniProtKB-UniRule"/>
</dbReference>
<dbReference type="GO" id="GO:0055036">
    <property type="term" value="C:virion membrane"/>
    <property type="evidence" value="ECO:0007669"/>
    <property type="project" value="UniProtKB-SubCell"/>
</dbReference>
<dbReference type="GO" id="GO:0004308">
    <property type="term" value="F:exo-alpha-sialidase activity"/>
    <property type="evidence" value="ECO:0007669"/>
    <property type="project" value="UniProtKB-UniRule"/>
</dbReference>
<dbReference type="GO" id="GO:0046872">
    <property type="term" value="F:metal ion binding"/>
    <property type="evidence" value="ECO:0007669"/>
    <property type="project" value="UniProtKB-UniRule"/>
</dbReference>
<dbReference type="GO" id="GO:0005975">
    <property type="term" value="P:carbohydrate metabolic process"/>
    <property type="evidence" value="ECO:0007669"/>
    <property type="project" value="InterPro"/>
</dbReference>
<dbReference type="GO" id="GO:0046761">
    <property type="term" value="P:viral budding from plasma membrane"/>
    <property type="evidence" value="ECO:0007669"/>
    <property type="project" value="UniProtKB-UniRule"/>
</dbReference>
<dbReference type="CDD" id="cd15483">
    <property type="entry name" value="Influenza_NA"/>
    <property type="match status" value="1"/>
</dbReference>
<dbReference type="Gene3D" id="2.120.10.10">
    <property type="match status" value="1"/>
</dbReference>
<dbReference type="HAMAP" id="MF_04071">
    <property type="entry name" value="INFV_NRAM"/>
    <property type="match status" value="1"/>
</dbReference>
<dbReference type="InterPro" id="IPR001860">
    <property type="entry name" value="Glyco_hydro_34"/>
</dbReference>
<dbReference type="InterPro" id="IPR033654">
    <property type="entry name" value="Sialidase_Influenza_A/B"/>
</dbReference>
<dbReference type="InterPro" id="IPR036278">
    <property type="entry name" value="Sialidase_sf"/>
</dbReference>
<dbReference type="Pfam" id="PF00064">
    <property type="entry name" value="Neur"/>
    <property type="match status" value="1"/>
</dbReference>
<dbReference type="SUPFAM" id="SSF50939">
    <property type="entry name" value="Sialidases"/>
    <property type="match status" value="1"/>
</dbReference>
<keyword id="KW-0106">Calcium</keyword>
<keyword id="KW-1015">Disulfide bond</keyword>
<keyword id="KW-0325">Glycoprotein</keyword>
<keyword id="KW-0326">Glycosidase</keyword>
<keyword id="KW-1032">Host cell membrane</keyword>
<keyword id="KW-1043">Host membrane</keyword>
<keyword id="KW-0378">Hydrolase</keyword>
<keyword id="KW-0472">Membrane</keyword>
<keyword id="KW-0479">Metal-binding</keyword>
<keyword id="KW-0735">Signal-anchor</keyword>
<keyword id="KW-0812">Transmembrane</keyword>
<keyword id="KW-1133">Transmembrane helix</keyword>
<keyword id="KW-0946">Virion</keyword>
<evidence type="ECO:0000255" key="1">
    <source>
        <dbReference type="HAMAP-Rule" id="MF_04071"/>
    </source>
</evidence>
<name>NRAM_I78A7</name>
<gene>
    <name evidence="1" type="primary">NA</name>
</gene>
<feature type="chain" id="PRO_0000280141" description="Neuraminidase">
    <location>
        <begin position="1"/>
        <end position="469"/>
    </location>
</feature>
<feature type="topological domain" description="Intravirion" evidence="1">
    <location>
        <begin position="1"/>
        <end position="9"/>
    </location>
</feature>
<feature type="transmembrane region" description="Helical" evidence="1">
    <location>
        <begin position="10"/>
        <end position="30"/>
    </location>
</feature>
<feature type="topological domain" description="Virion surface" evidence="1">
    <location>
        <begin position="31"/>
        <end position="469"/>
    </location>
</feature>
<feature type="region of interest" description="Involved in apical transport and lipid raft association" evidence="1">
    <location>
        <begin position="11"/>
        <end position="33"/>
    </location>
</feature>
<feature type="region of interest" description="Hypervariable stalk region" evidence="1">
    <location>
        <begin position="36"/>
        <end position="88"/>
    </location>
</feature>
<feature type="region of interest" description="Head of neuraminidase" evidence="1">
    <location>
        <begin position="91"/>
        <end position="469"/>
    </location>
</feature>
<feature type="active site" description="Proton donor/acceptor" evidence="1">
    <location>
        <position position="151"/>
    </location>
</feature>
<feature type="active site" description="Nucleophile" evidence="1">
    <location>
        <position position="406"/>
    </location>
</feature>
<feature type="binding site" evidence="1">
    <location>
        <position position="118"/>
    </location>
    <ligand>
        <name>substrate</name>
    </ligand>
</feature>
<feature type="binding site" evidence="1">
    <location>
        <position position="152"/>
    </location>
    <ligand>
        <name>substrate</name>
    </ligand>
</feature>
<feature type="binding site" evidence="1">
    <location>
        <begin position="276"/>
        <end position="277"/>
    </location>
    <ligand>
        <name>substrate</name>
    </ligand>
</feature>
<feature type="binding site" evidence="1">
    <location>
        <position position="292"/>
    </location>
    <ligand>
        <name>substrate</name>
    </ligand>
</feature>
<feature type="binding site" evidence="1">
    <location>
        <position position="293"/>
    </location>
    <ligand>
        <name>Ca(2+)</name>
        <dbReference type="ChEBI" id="CHEBI:29108"/>
    </ligand>
</feature>
<feature type="binding site" evidence="1">
    <location>
        <position position="297"/>
    </location>
    <ligand>
        <name>Ca(2+)</name>
        <dbReference type="ChEBI" id="CHEBI:29108"/>
    </ligand>
</feature>
<feature type="binding site" evidence="1">
    <location>
        <position position="324"/>
    </location>
    <ligand>
        <name>Ca(2+)</name>
        <dbReference type="ChEBI" id="CHEBI:29108"/>
    </ligand>
</feature>
<feature type="binding site" evidence="1">
    <location>
        <position position="371"/>
    </location>
    <ligand>
        <name>substrate</name>
    </ligand>
</feature>
<feature type="glycosylation site" description="N-linked (GlcNAc...) asparagine; by host" evidence="1">
    <location>
        <position position="61"/>
    </location>
</feature>
<feature type="glycosylation site" description="N-linked (GlcNAc...) asparagine; by host" evidence="1">
    <location>
        <position position="70"/>
    </location>
</feature>
<feature type="glycosylation site" description="N-linked (GlcNAc...) asparagine; by host" evidence="1">
    <location>
        <position position="86"/>
    </location>
</feature>
<feature type="glycosylation site" description="N-linked (GlcNAc...) asparagine; by host" evidence="1">
    <location>
        <position position="146"/>
    </location>
</feature>
<feature type="glycosylation site" description="N-linked (GlcNAc...) asparagine; by host" evidence="1">
    <location>
        <position position="200"/>
    </location>
</feature>
<feature type="glycosylation site" description="N-linked (GlcNAc...) asparagine; by host" evidence="1">
    <location>
        <position position="234"/>
    </location>
</feature>
<feature type="glycosylation site" description="N-linked (GlcNAc...) asparagine; by host" evidence="1">
    <location>
        <position position="402"/>
    </location>
</feature>
<feature type="disulfide bond" evidence="1">
    <location>
        <begin position="92"/>
        <end position="417"/>
    </location>
</feature>
<feature type="disulfide bond" evidence="1">
    <location>
        <begin position="124"/>
        <end position="129"/>
    </location>
</feature>
<feature type="disulfide bond" evidence="1">
    <location>
        <begin position="183"/>
        <end position="230"/>
    </location>
</feature>
<feature type="disulfide bond" evidence="1">
    <location>
        <begin position="232"/>
        <end position="237"/>
    </location>
</feature>
<feature type="disulfide bond" evidence="1">
    <location>
        <begin position="278"/>
        <end position="291"/>
    </location>
</feature>
<feature type="disulfide bond" evidence="1">
    <location>
        <begin position="280"/>
        <end position="289"/>
    </location>
</feature>
<feature type="disulfide bond" evidence="1">
    <location>
        <begin position="318"/>
        <end position="337"/>
    </location>
</feature>
<feature type="disulfide bond" evidence="1">
    <location>
        <begin position="421"/>
        <end position="447"/>
    </location>
</feature>
<comment type="function">
    <text evidence="1">Catalyzes the removal of terminal sialic acid residues from viral and cellular glycoconjugates. Cleaves off the terminal sialic acids on the glycosylated HA during virus budding to facilitate virus release. Additionally helps virus spread through the circulation by further removing sialic acids from the cell surface. These cleavages prevent self-aggregation and ensure the efficient spread of the progeny virus from cell to cell. Otherwise, infection would be limited to one round of replication. Described as a receptor-destroying enzyme because it cleaves a terminal sialic acid from the cellular receptors. May facilitate viral invasion of the upper airways by cleaving the sialic acid moieties on the mucin of the airway epithelial cells. Likely to plays a role in the budding process through its association with lipid rafts during intracellular transport. May additionally display a raft-association independent effect on budding. Plays a role in the determination of host range restriction on replication and virulence. Sialidase activity in late endosome/lysosome traffic seems to enhance virus replication.</text>
</comment>
<comment type="catalytic activity">
    <reaction evidence="1">
        <text>Hydrolysis of alpha-(2-&gt;3)-, alpha-(2-&gt;6)-, alpha-(2-&gt;8)- glycosidic linkages of terminal sialic acid residues in oligosaccharides, glycoproteins, glycolipids, colominic acid and synthetic substrates.</text>
        <dbReference type="EC" id="3.2.1.18"/>
    </reaction>
</comment>
<comment type="cofactor">
    <cofactor evidence="1">
        <name>Ca(2+)</name>
        <dbReference type="ChEBI" id="CHEBI:29108"/>
    </cofactor>
</comment>
<comment type="activity regulation">
    <text evidence="1">Inhibited by the neuraminidase inhibitors zanamivir (Relenza) and oseltamivir (Tamiflu). These drugs interfere with the release of progeny virus from infected cells and are effective against all influenza strains. Resistance to neuraminidase inhibitors is quite rare.</text>
</comment>
<comment type="subunit">
    <text evidence="1">Homotetramer.</text>
</comment>
<comment type="subcellular location">
    <subcellularLocation>
        <location evidence="1">Virion membrane</location>
    </subcellularLocation>
    <subcellularLocation>
        <location evidence="1">Host apical cell membrane</location>
        <topology evidence="1">Single-pass type II membrane protein</topology>
    </subcellularLocation>
    <text evidence="1">Preferentially accumulates at the apical plasma membrane in infected polarized epithelial cells, which is the virus assembly site. Uses lipid rafts for cell surface transport and apical sorting. In the virion, forms a mushroom-shaped spike on the surface of the membrane.</text>
</comment>
<comment type="domain">
    <text evidence="1">Intact N-terminus is essential for virion morphogenesis. Possesses two apical sorting signals, one in the ectodomain, which is likely to be a glycan, and the other in the transmembrane domain. The transmembrane domain also plays a role in lipid raft association.</text>
</comment>
<comment type="PTM">
    <text evidence="1">N-glycosylated.</text>
</comment>
<comment type="miscellaneous">
    <text>The influenza A genome consist of 8 RNA segments. Genetic variation of hemagglutinin and/or neuraminidase genes results in the emergence of new influenza strains. The mechanism of variation can be the result of point mutations or the result of genetic reassortment between segments of two different strains.</text>
</comment>
<comment type="similarity">
    <text evidence="1">Belongs to the glycosyl hydrolase 34 family.</text>
</comment>
<protein>
    <recommendedName>
        <fullName evidence="1">Neuraminidase</fullName>
        <ecNumber evidence="1">3.2.1.18</ecNumber>
    </recommendedName>
</protein>
<proteinExistence type="inferred from homology"/>